<dbReference type="EMBL" id="BC109724">
    <property type="protein sequence ID" value="AAI09725.1"/>
    <property type="molecule type" value="mRNA"/>
</dbReference>
<dbReference type="RefSeq" id="NP_001073093.1">
    <property type="nucleotide sequence ID" value="NM_001079625.2"/>
</dbReference>
<dbReference type="PDB" id="7RRO">
    <property type="method" value="EM"/>
    <property type="resolution" value="3.40 A"/>
    <property type="chains" value="0/7=1-232"/>
</dbReference>
<dbReference type="PDB" id="8OTZ">
    <property type="method" value="EM"/>
    <property type="resolution" value="3.60 A"/>
    <property type="chains" value="0/V=1-232"/>
</dbReference>
<dbReference type="PDB" id="9CPB">
    <property type="method" value="EM"/>
    <property type="resolution" value="3.52 A"/>
    <property type="chains" value="3A=1-232"/>
</dbReference>
<dbReference type="PDBsum" id="7RRO"/>
<dbReference type="PDBsum" id="8OTZ"/>
<dbReference type="PDBsum" id="9CPB"/>
<dbReference type="EMDB" id="EMD-17187"/>
<dbReference type="EMDB" id="EMD-24664"/>
<dbReference type="EMDB" id="EMD-45801"/>
<dbReference type="EMDB" id="EMD-50664"/>
<dbReference type="SMR" id="Q32L77"/>
<dbReference type="FunCoup" id="Q32L77">
    <property type="interactions" value="9"/>
</dbReference>
<dbReference type="STRING" id="9913.ENSBTAP00000044717"/>
<dbReference type="GlyCosmos" id="Q32L77">
    <property type="glycosylation" value="1 site, No reported glycans"/>
</dbReference>
<dbReference type="GlyGen" id="Q32L77">
    <property type="glycosylation" value="1 site"/>
</dbReference>
<dbReference type="PaxDb" id="9913-ENSBTAP00000044717"/>
<dbReference type="Ensembl" id="ENSBTAT00000047514.4">
    <property type="protein sequence ID" value="ENSBTAP00000044717.3"/>
    <property type="gene ID" value="ENSBTAG00000033396.5"/>
</dbReference>
<dbReference type="GeneID" id="616736"/>
<dbReference type="KEGG" id="bta:616736"/>
<dbReference type="CTD" id="138255"/>
<dbReference type="VEuPathDB" id="HostDB:ENSBTAG00000033396"/>
<dbReference type="VGNC" id="VGNC:52738">
    <property type="gene designation" value="CFAP95"/>
</dbReference>
<dbReference type="eggNOG" id="ENOG502R194">
    <property type="taxonomic scope" value="Eukaryota"/>
</dbReference>
<dbReference type="GeneTree" id="ENSGT00390000014593"/>
<dbReference type="HOGENOM" id="CLU_108076_0_0_1"/>
<dbReference type="InParanoid" id="Q32L77"/>
<dbReference type="OMA" id="DWCSSRQ"/>
<dbReference type="OrthoDB" id="309575at2759"/>
<dbReference type="TreeFam" id="TF328471"/>
<dbReference type="Proteomes" id="UP000009136">
    <property type="component" value="Chromosome 8"/>
</dbReference>
<dbReference type="Bgee" id="ENSBTAG00000033396">
    <property type="expression patterns" value="Expressed in spermatid and 50 other cell types or tissues"/>
</dbReference>
<dbReference type="GO" id="GO:0160111">
    <property type="term" value="C:axonemal A tubule inner sheath"/>
    <property type="evidence" value="ECO:0000250"/>
    <property type="project" value="UniProtKB"/>
</dbReference>
<dbReference type="GO" id="GO:0005879">
    <property type="term" value="C:axonemal microtubule"/>
    <property type="evidence" value="ECO:0000314"/>
    <property type="project" value="UniProtKB"/>
</dbReference>
<dbReference type="GO" id="GO:0005737">
    <property type="term" value="C:cytoplasm"/>
    <property type="evidence" value="ECO:0000250"/>
    <property type="project" value="UniProtKB"/>
</dbReference>
<dbReference type="GO" id="GO:0005886">
    <property type="term" value="C:plasma membrane"/>
    <property type="evidence" value="ECO:0000250"/>
    <property type="project" value="UniProtKB"/>
</dbReference>
<dbReference type="GO" id="GO:0036126">
    <property type="term" value="C:sperm flagellum"/>
    <property type="evidence" value="ECO:0000250"/>
    <property type="project" value="UniProtKB"/>
</dbReference>
<dbReference type="GO" id="GO:0030317">
    <property type="term" value="P:flagellated sperm motility"/>
    <property type="evidence" value="ECO:0000250"/>
    <property type="project" value="UniProtKB"/>
</dbReference>
<dbReference type="InterPro" id="IPR027905">
    <property type="entry name" value="CFAP95"/>
</dbReference>
<dbReference type="PANTHER" id="PTHR35069:SF1">
    <property type="entry name" value="CILIA- AND FLAGELLA-ASSOCIATED PROTEIN 95"/>
    <property type="match status" value="1"/>
</dbReference>
<dbReference type="PANTHER" id="PTHR35069">
    <property type="entry name" value="PROTEIN C9ORF135"/>
    <property type="match status" value="1"/>
</dbReference>
<dbReference type="Pfam" id="PF15139">
    <property type="entry name" value="CFAP95"/>
    <property type="match status" value="1"/>
</dbReference>
<accession>Q32L77</accession>
<proteinExistence type="evidence at protein level"/>
<reference key="1">
    <citation type="submission" date="2005-11" db="EMBL/GenBank/DDBJ databases">
        <authorList>
            <consortium name="NIH - Mammalian Gene Collection (MGC) project"/>
        </authorList>
    </citation>
    <scope>NUCLEOTIDE SEQUENCE [LARGE SCALE MRNA]</scope>
    <source>
        <strain>Crossbred X Angus</strain>
        <tissue>Liver</tissue>
    </source>
</reference>
<reference evidence="5" key="2">
    <citation type="journal article" date="2021" name="Cell">
        <title>De novo identification of mammalian ciliary motility proteins using cryo-EM.</title>
        <authorList>
            <person name="Gui M."/>
            <person name="Farley H."/>
            <person name="Anujan P."/>
            <person name="Anderson J.R."/>
            <person name="Maxwell D.W."/>
            <person name="Whitchurch J.B."/>
            <person name="Botsch J.J."/>
            <person name="Qiu T."/>
            <person name="Meleppattu S."/>
            <person name="Singh S.K."/>
            <person name="Zhang Q."/>
            <person name="Thompson J."/>
            <person name="Lucas J.S."/>
            <person name="Bingle C.D."/>
            <person name="Norris D.P."/>
            <person name="Roy S."/>
            <person name="Brown A."/>
        </authorList>
    </citation>
    <scope>STRUCTURE BY ELECTRON MICROSCOPY (3.40 ANGSTROMS)</scope>
    <scope>FUNCTION</scope>
    <scope>SUBCELLULAR LOCATION</scope>
    <scope>TISSUE SPECIFICITY</scope>
</reference>
<reference evidence="6" key="3">
    <citation type="journal article" date="2023" name="Cell">
        <title>Structural specializations of the sperm tail.</title>
        <authorList>
            <person name="Leung M.R."/>
            <person name="Zeng J."/>
            <person name="Wang X."/>
            <person name="Roelofs M.C."/>
            <person name="Huang W."/>
            <person name="Zenezini Chiozzi R."/>
            <person name="Hevler J.F."/>
            <person name="Heck A.J.R."/>
            <person name="Dutcher S.K."/>
            <person name="Brown A."/>
            <person name="Zhang R."/>
            <person name="Zeev-Ben-Mordehai T."/>
        </authorList>
    </citation>
    <scope>STRUCTURE BY ELECTRON MICROSCOPY (3.60 ANGSTROMS)</scope>
    <scope>FUNCTION</scope>
    <scope>SUBUNIT</scope>
    <scope>SUBCELLULAR LOCATION</scope>
</reference>
<feature type="chain" id="PRO_0000271062" description="Cilia- and flagella-associated protein 95">
    <location>
        <begin position="1"/>
        <end position="232"/>
    </location>
</feature>
<feature type="topological domain" description="Extracellular" evidence="2">
    <location>
        <begin position="1"/>
        <end position="96"/>
    </location>
</feature>
<feature type="transmembrane region" description="Helical" evidence="2">
    <location>
        <begin position="97"/>
        <end position="115"/>
    </location>
</feature>
<feature type="topological domain" description="Cytoplasmic" evidence="2">
    <location>
        <begin position="116"/>
        <end position="232"/>
    </location>
</feature>
<feature type="region of interest" description="Mn" evidence="1">
    <location>
        <begin position="153"/>
        <end position="163"/>
    </location>
</feature>
<feature type="glycosylation site" description="N-linked (GlcNAc...) asparagine" evidence="2">
    <location>
        <position position="75"/>
    </location>
</feature>
<protein>
    <recommendedName>
        <fullName evidence="1">Cilia- and flagella-associated protein 95</fullName>
    </recommendedName>
</protein>
<organism>
    <name type="scientific">Bos taurus</name>
    <name type="common">Bovine</name>
    <dbReference type="NCBI Taxonomy" id="9913"/>
    <lineage>
        <taxon>Eukaryota</taxon>
        <taxon>Metazoa</taxon>
        <taxon>Chordata</taxon>
        <taxon>Craniata</taxon>
        <taxon>Vertebrata</taxon>
        <taxon>Euteleostomi</taxon>
        <taxon>Mammalia</taxon>
        <taxon>Eutheria</taxon>
        <taxon>Laurasiatheria</taxon>
        <taxon>Artiodactyla</taxon>
        <taxon>Ruminantia</taxon>
        <taxon>Pecora</taxon>
        <taxon>Bovidae</taxon>
        <taxon>Bovinae</taxon>
        <taxon>Bos</taxon>
    </lineage>
</organism>
<gene>
    <name evidence="1" type="primary">CFAP95</name>
</gene>
<name>CFA95_BOVIN</name>
<keyword id="KW-0002">3D-structure</keyword>
<keyword id="KW-1003">Cell membrane</keyword>
<keyword id="KW-0966">Cell projection</keyword>
<keyword id="KW-0969">Cilium</keyword>
<keyword id="KW-0963">Cytoplasm</keyword>
<keyword id="KW-0206">Cytoskeleton</keyword>
<keyword id="KW-0282">Flagellum</keyword>
<keyword id="KW-0325">Glycoprotein</keyword>
<keyword id="KW-0472">Membrane</keyword>
<keyword id="KW-1185">Reference proteome</keyword>
<keyword id="KW-0812">Transmembrane</keyword>
<keyword id="KW-1133">Transmembrane helix</keyword>
<sequence length="232" mass="26623">MDSSDSSCQEWCSHGQYWLELGPTDLMERKGSLTLRSHHKKYSKPVLVYSWHRDRETYPKDYDIEGPEEVKKLCNSTYRRLGTSEPPVWISETREKMAQVCLNTKLAKIKSKALLNEETMNSGIIERDTGLPATGFGALFTRHSPDWSKMCTLTTYAEEYAPPYEYQPLGDPCQDDDYSIVHRKCRSQFTDLDGSKRVGINTWHDESGIYANSYVKRKLYSLTGGPIAPFLK</sequence>
<evidence type="ECO:0000250" key="1">
    <source>
        <dbReference type="UniProtKB" id="Q5VTT2"/>
    </source>
</evidence>
<evidence type="ECO:0000255" key="2"/>
<evidence type="ECO:0000269" key="3">
    <source>
    </source>
</evidence>
<evidence type="ECO:0000269" key="4">
    <source>
    </source>
</evidence>
<evidence type="ECO:0007744" key="5">
    <source>
        <dbReference type="PDB" id="7RRO"/>
    </source>
</evidence>
<evidence type="ECO:0007744" key="6">
    <source>
        <dbReference type="PDB" id="8OTZ"/>
    </source>
</evidence>
<comment type="function">
    <text evidence="3 4">Microtubule inner protein (MIP) part of the dynein-decorated doublet microtubules (DMTs) in cilia axoneme, which is required for motile cilia beating.</text>
</comment>
<comment type="subunit">
    <text evidence="1 4">Microtubule inner protein component of sperm flagellar doublet microtubules (PubMed:37327785). Interacts with MYH9 (By similarity). Interacts with MYH10 (By similarity).</text>
</comment>
<comment type="subcellular location">
    <subcellularLocation>
        <location evidence="3">Cytoplasm</location>
        <location evidence="3">Cytoskeleton</location>
        <location evidence="3">Cilium axoneme</location>
    </subcellularLocation>
    <subcellularLocation>
        <location evidence="4">Cytoplasm</location>
        <location evidence="4">Cytoskeleton</location>
        <location evidence="4">Flagellum axoneme</location>
    </subcellularLocation>
    <subcellularLocation>
        <location evidence="1">Cell membrane</location>
        <topology evidence="2">Single-pass membrane protein</topology>
    </subcellularLocation>
    <subcellularLocation>
        <location evidence="1">Cytoplasm</location>
    </subcellularLocation>
</comment>
<comment type="tissue specificity">
    <text evidence="3">Expressed in trachea multiciliated cells.</text>
</comment>